<evidence type="ECO:0000255" key="1">
    <source>
        <dbReference type="HAMAP-Rule" id="MF_00652"/>
    </source>
</evidence>
<dbReference type="EMBL" id="BX950851">
    <property type="protein sequence ID" value="CAG76786.1"/>
    <property type="molecule type" value="Genomic_DNA"/>
</dbReference>
<dbReference type="RefSeq" id="WP_011095386.1">
    <property type="nucleotide sequence ID" value="NC_004547.2"/>
</dbReference>
<dbReference type="SMR" id="Q6D0B1"/>
<dbReference type="STRING" id="218491.ECA3888"/>
<dbReference type="KEGG" id="eca:ECA3888"/>
<dbReference type="PATRIC" id="fig|218491.5.peg.3946"/>
<dbReference type="eggNOG" id="COG3022">
    <property type="taxonomic scope" value="Bacteria"/>
</dbReference>
<dbReference type="HOGENOM" id="CLU_061989_0_0_6"/>
<dbReference type="OrthoDB" id="9777133at2"/>
<dbReference type="Proteomes" id="UP000007966">
    <property type="component" value="Chromosome"/>
</dbReference>
<dbReference type="GO" id="GO:0005829">
    <property type="term" value="C:cytosol"/>
    <property type="evidence" value="ECO:0007669"/>
    <property type="project" value="TreeGrafter"/>
</dbReference>
<dbReference type="GO" id="GO:0033194">
    <property type="term" value="P:response to hydroperoxide"/>
    <property type="evidence" value="ECO:0007669"/>
    <property type="project" value="TreeGrafter"/>
</dbReference>
<dbReference type="HAMAP" id="MF_00652">
    <property type="entry name" value="UPF0246"/>
    <property type="match status" value="1"/>
</dbReference>
<dbReference type="InterPro" id="IPR005583">
    <property type="entry name" value="YaaA"/>
</dbReference>
<dbReference type="NCBIfam" id="NF002541">
    <property type="entry name" value="PRK02101.1-1"/>
    <property type="match status" value="1"/>
</dbReference>
<dbReference type="NCBIfam" id="NF002542">
    <property type="entry name" value="PRK02101.1-3"/>
    <property type="match status" value="1"/>
</dbReference>
<dbReference type="PANTHER" id="PTHR30283:SF4">
    <property type="entry name" value="PEROXIDE STRESS RESISTANCE PROTEIN YAAA"/>
    <property type="match status" value="1"/>
</dbReference>
<dbReference type="PANTHER" id="PTHR30283">
    <property type="entry name" value="PEROXIDE STRESS RESPONSE PROTEIN YAAA"/>
    <property type="match status" value="1"/>
</dbReference>
<dbReference type="Pfam" id="PF03883">
    <property type="entry name" value="H2O2_YaaD"/>
    <property type="match status" value="1"/>
</dbReference>
<comment type="similarity">
    <text evidence="1">Belongs to the UPF0246 family.</text>
</comment>
<keyword id="KW-1185">Reference proteome</keyword>
<name>Y3888_PECAS</name>
<protein>
    <recommendedName>
        <fullName evidence="1">UPF0246 protein ECA3888</fullName>
    </recommendedName>
</protein>
<reference key="1">
    <citation type="journal article" date="2004" name="Proc. Natl. Acad. Sci. U.S.A.">
        <title>Genome sequence of the enterobacterial phytopathogen Erwinia carotovora subsp. atroseptica and characterization of virulence factors.</title>
        <authorList>
            <person name="Bell K.S."/>
            <person name="Sebaihia M."/>
            <person name="Pritchard L."/>
            <person name="Holden M.T.G."/>
            <person name="Hyman L.J."/>
            <person name="Holeva M.C."/>
            <person name="Thomson N.R."/>
            <person name="Bentley S.D."/>
            <person name="Churcher L.J.C."/>
            <person name="Mungall K."/>
            <person name="Atkin R."/>
            <person name="Bason N."/>
            <person name="Brooks K."/>
            <person name="Chillingworth T."/>
            <person name="Clark K."/>
            <person name="Doggett J."/>
            <person name="Fraser A."/>
            <person name="Hance Z."/>
            <person name="Hauser H."/>
            <person name="Jagels K."/>
            <person name="Moule S."/>
            <person name="Norbertczak H."/>
            <person name="Ormond D."/>
            <person name="Price C."/>
            <person name="Quail M.A."/>
            <person name="Sanders M."/>
            <person name="Walker D."/>
            <person name="Whitehead S."/>
            <person name="Salmond G.P.C."/>
            <person name="Birch P.R.J."/>
            <person name="Parkhill J."/>
            <person name="Toth I.K."/>
        </authorList>
    </citation>
    <scope>NUCLEOTIDE SEQUENCE [LARGE SCALE GENOMIC DNA]</scope>
    <source>
        <strain>SCRI 1043 / ATCC BAA-672</strain>
    </source>
</reference>
<sequence>MLITISPAKTLDYTSPLATTRYTQPELLDYSSQLISVCKKLTPAHIASLMSISDKLADLNAGRFSEWHPDFTPENARQALLAFKGDVYTGLAAESFSEDDFDFAQQHLRMLSGLYGVLRPLDLMQPYRLEMGTKLENKAGKDLYSFWGDTITEKLNQALHAQGDDVLINLASDEYFKAVKPKNLNARLIKPVFLDEKNGKFKVISFYAKKARGLMSRFIIQNRLTQPEQLKAFNLEGYAFEAADSSANELVFKRHEQ</sequence>
<organism>
    <name type="scientific">Pectobacterium atrosepticum (strain SCRI 1043 / ATCC BAA-672)</name>
    <name type="common">Erwinia carotovora subsp. atroseptica</name>
    <dbReference type="NCBI Taxonomy" id="218491"/>
    <lineage>
        <taxon>Bacteria</taxon>
        <taxon>Pseudomonadati</taxon>
        <taxon>Pseudomonadota</taxon>
        <taxon>Gammaproteobacteria</taxon>
        <taxon>Enterobacterales</taxon>
        <taxon>Pectobacteriaceae</taxon>
        <taxon>Pectobacterium</taxon>
    </lineage>
</organism>
<accession>Q6D0B1</accession>
<feature type="chain" id="PRO_0000262014" description="UPF0246 protein ECA3888">
    <location>
        <begin position="1"/>
        <end position="257"/>
    </location>
</feature>
<proteinExistence type="inferred from homology"/>
<gene>
    <name type="ordered locus">ECA3888</name>
</gene>